<organism>
    <name type="scientific">Leptospira borgpetersenii serovar Hardjo-bovis (strain JB197)</name>
    <dbReference type="NCBI Taxonomy" id="355277"/>
    <lineage>
        <taxon>Bacteria</taxon>
        <taxon>Pseudomonadati</taxon>
        <taxon>Spirochaetota</taxon>
        <taxon>Spirochaetia</taxon>
        <taxon>Leptospirales</taxon>
        <taxon>Leptospiraceae</taxon>
        <taxon>Leptospira</taxon>
    </lineage>
</organism>
<keyword id="KW-0032">Aminotransferase</keyword>
<keyword id="KW-0663">Pyridoxal phosphate</keyword>
<keyword id="KW-0808">Transferase</keyword>
<protein>
    <recommendedName>
        <fullName evidence="1">LL-diaminopimelate aminotransferase</fullName>
        <shortName evidence="1">DAP-AT</shortName>
        <shortName evidence="1">DAP-aminotransferase</shortName>
        <shortName evidence="1">LL-DAP-aminotransferase</shortName>
        <ecNumber evidence="1">2.6.1.83</ecNumber>
    </recommendedName>
</protein>
<accession>Q04UL5</accession>
<comment type="function">
    <text evidence="1">Involved in the synthesis of meso-diaminopimelate (m-DAP or DL-DAP), required for both lysine and peptidoglycan biosynthesis. Catalyzes the direct conversion of tetrahydrodipicolinate to LL-diaminopimelate.</text>
</comment>
<comment type="catalytic activity">
    <reaction evidence="1">
        <text>(2S,6S)-2,6-diaminopimelate + 2-oxoglutarate = (S)-2,3,4,5-tetrahydrodipicolinate + L-glutamate + H2O + H(+)</text>
        <dbReference type="Rhea" id="RHEA:23988"/>
        <dbReference type="ChEBI" id="CHEBI:15377"/>
        <dbReference type="ChEBI" id="CHEBI:15378"/>
        <dbReference type="ChEBI" id="CHEBI:16810"/>
        <dbReference type="ChEBI" id="CHEBI:16845"/>
        <dbReference type="ChEBI" id="CHEBI:29985"/>
        <dbReference type="ChEBI" id="CHEBI:57609"/>
        <dbReference type="EC" id="2.6.1.83"/>
    </reaction>
</comment>
<comment type="cofactor">
    <cofactor evidence="1">
        <name>pyridoxal 5'-phosphate</name>
        <dbReference type="ChEBI" id="CHEBI:597326"/>
    </cofactor>
</comment>
<comment type="pathway">
    <text evidence="1">Amino-acid biosynthesis; L-lysine biosynthesis via DAP pathway; LL-2,6-diaminopimelate from (S)-tetrahydrodipicolinate (aminotransferase route): step 1/1.</text>
</comment>
<comment type="subunit">
    <text evidence="1">Homodimer.</text>
</comment>
<comment type="similarity">
    <text evidence="1">Belongs to the class-I pyridoxal-phosphate-dependent aminotransferase family. LL-diaminopimelate aminotransferase subfamily.</text>
</comment>
<dbReference type="EC" id="2.6.1.83" evidence="1"/>
<dbReference type="EMBL" id="CP000350">
    <property type="protein sequence ID" value="ABJ75405.1"/>
    <property type="molecule type" value="Genomic_DNA"/>
</dbReference>
<dbReference type="RefSeq" id="WP_011671606.1">
    <property type="nucleotide sequence ID" value="NC_008510.1"/>
</dbReference>
<dbReference type="SMR" id="Q04UL5"/>
<dbReference type="KEGG" id="lbj:LBJ_0733"/>
<dbReference type="HOGENOM" id="CLU_051433_0_0_12"/>
<dbReference type="UniPathway" id="UPA00034">
    <property type="reaction ID" value="UER00466"/>
</dbReference>
<dbReference type="Proteomes" id="UP000000656">
    <property type="component" value="Chromosome 1"/>
</dbReference>
<dbReference type="GO" id="GO:0010285">
    <property type="term" value="F:L,L-diaminopimelate aminotransferase activity"/>
    <property type="evidence" value="ECO:0007669"/>
    <property type="project" value="UniProtKB-UniRule"/>
</dbReference>
<dbReference type="GO" id="GO:0030170">
    <property type="term" value="F:pyridoxal phosphate binding"/>
    <property type="evidence" value="ECO:0007669"/>
    <property type="project" value="UniProtKB-UniRule"/>
</dbReference>
<dbReference type="GO" id="GO:0033362">
    <property type="term" value="P:lysine biosynthetic process via diaminopimelate, diaminopimelate-aminotransferase pathway"/>
    <property type="evidence" value="ECO:0007669"/>
    <property type="project" value="UniProtKB-UniRule"/>
</dbReference>
<dbReference type="CDD" id="cd00609">
    <property type="entry name" value="AAT_like"/>
    <property type="match status" value="1"/>
</dbReference>
<dbReference type="FunFam" id="3.40.640.10:FF:000099">
    <property type="entry name" value="LL-diaminopimelate aminotransferase, chloroplastic"/>
    <property type="match status" value="1"/>
</dbReference>
<dbReference type="Gene3D" id="3.90.1150.10">
    <property type="entry name" value="Aspartate Aminotransferase, domain 1"/>
    <property type="match status" value="1"/>
</dbReference>
<dbReference type="Gene3D" id="3.40.640.10">
    <property type="entry name" value="Type I PLP-dependent aspartate aminotransferase-like (Major domain)"/>
    <property type="match status" value="1"/>
</dbReference>
<dbReference type="HAMAP" id="MF_01642">
    <property type="entry name" value="DapL_aminotrans_1"/>
    <property type="match status" value="1"/>
</dbReference>
<dbReference type="InterPro" id="IPR004839">
    <property type="entry name" value="Aminotransferase_I/II_large"/>
</dbReference>
<dbReference type="InterPro" id="IPR019942">
    <property type="entry name" value="DapL/ALD1"/>
</dbReference>
<dbReference type="InterPro" id="IPR015424">
    <property type="entry name" value="PyrdxlP-dep_Trfase"/>
</dbReference>
<dbReference type="InterPro" id="IPR015421">
    <property type="entry name" value="PyrdxlP-dep_Trfase_major"/>
</dbReference>
<dbReference type="InterPro" id="IPR015422">
    <property type="entry name" value="PyrdxlP-dep_Trfase_small"/>
</dbReference>
<dbReference type="NCBIfam" id="TIGR03542">
    <property type="entry name" value="DAPAT_plant"/>
    <property type="match status" value="1"/>
</dbReference>
<dbReference type="PANTHER" id="PTHR43144">
    <property type="entry name" value="AMINOTRANSFERASE"/>
    <property type="match status" value="1"/>
</dbReference>
<dbReference type="Pfam" id="PF00155">
    <property type="entry name" value="Aminotran_1_2"/>
    <property type="match status" value="1"/>
</dbReference>
<dbReference type="SUPFAM" id="SSF53383">
    <property type="entry name" value="PLP-dependent transferases"/>
    <property type="match status" value="1"/>
</dbReference>
<evidence type="ECO:0000255" key="1">
    <source>
        <dbReference type="HAMAP-Rule" id="MF_01642"/>
    </source>
</evidence>
<sequence>MANINENYLKLKAGYLFPEISKRVKTYSEKNPSAKIIRLGIGDVTLPIVPSVVDAMIAASKEMGTAGGFHGYGPEQGYSFLLKSIANNDYGSLGIKIDESEIFVSDGSKCDCGNIQEIFSTDAKIAVSDPVYPVYVDTNVMAGRTGEIGADGRYSNLIYMPATKENGFQPEIPKEKADIIYLCYPNNPTGTVTTKEALRAWVEYAKKNNSIILYDSAYEAFISEPGVPRSIYEVAGAKEVAIEFRSFSKTAGFTGLRCAYIVIPKELKGRTRGGEEVSINSLWSRRHTTKFNGVSYVTQKGAEACYSPQGKKEIQASIAYYMSNAAKIREGLKKAGYEVFGGVNAPYIWLKTSDNLSSWDFFDRLLDKAQVVGTPGSGFGPAGEGYFRLSAFGKKEDVEEAIARISFL</sequence>
<proteinExistence type="inferred from homology"/>
<gene>
    <name evidence="1" type="primary">dapL</name>
    <name type="ordered locus">LBJ_0733</name>
</gene>
<reference key="1">
    <citation type="journal article" date="2006" name="Proc. Natl. Acad. Sci. U.S.A.">
        <title>Genome reduction in Leptospira borgpetersenii reflects limited transmission potential.</title>
        <authorList>
            <person name="Bulach D.M."/>
            <person name="Zuerner R.L."/>
            <person name="Wilson P."/>
            <person name="Seemann T."/>
            <person name="McGrath A."/>
            <person name="Cullen P.A."/>
            <person name="Davis J."/>
            <person name="Johnson M."/>
            <person name="Kuczek E."/>
            <person name="Alt D.P."/>
            <person name="Peterson-Burch B."/>
            <person name="Coppel R.L."/>
            <person name="Rood J.I."/>
            <person name="Davies J.K."/>
            <person name="Adler B."/>
        </authorList>
    </citation>
    <scope>NUCLEOTIDE SEQUENCE [LARGE SCALE GENOMIC DNA]</scope>
    <source>
        <strain>JB197</strain>
    </source>
</reference>
<name>DAPAT_LEPBJ</name>
<feature type="chain" id="PRO_0000342245" description="LL-diaminopimelate aminotransferase">
    <location>
        <begin position="1"/>
        <end position="408"/>
    </location>
</feature>
<feature type="binding site" evidence="1">
    <location>
        <position position="15"/>
    </location>
    <ligand>
        <name>substrate</name>
    </ligand>
</feature>
<feature type="binding site" evidence="1">
    <location>
        <position position="42"/>
    </location>
    <ligand>
        <name>substrate</name>
    </ligand>
</feature>
<feature type="binding site" evidence="1">
    <location>
        <position position="72"/>
    </location>
    <ligand>
        <name>pyridoxal 5'-phosphate</name>
        <dbReference type="ChEBI" id="CHEBI:597326"/>
    </ligand>
</feature>
<feature type="binding site" evidence="1">
    <location>
        <begin position="108"/>
        <end position="109"/>
    </location>
    <ligand>
        <name>pyridoxal 5'-phosphate</name>
        <dbReference type="ChEBI" id="CHEBI:597326"/>
    </ligand>
</feature>
<feature type="binding site" evidence="1">
    <location>
        <position position="109"/>
    </location>
    <ligand>
        <name>substrate</name>
    </ligand>
</feature>
<feature type="binding site" evidence="1">
    <location>
        <position position="132"/>
    </location>
    <ligand>
        <name>pyridoxal 5'-phosphate</name>
        <dbReference type="ChEBI" id="CHEBI:597326"/>
    </ligand>
</feature>
<feature type="binding site" evidence="1">
    <location>
        <position position="132"/>
    </location>
    <ligand>
        <name>substrate</name>
    </ligand>
</feature>
<feature type="binding site" evidence="1">
    <location>
        <position position="187"/>
    </location>
    <ligand>
        <name>pyridoxal 5'-phosphate</name>
        <dbReference type="ChEBI" id="CHEBI:597326"/>
    </ligand>
</feature>
<feature type="binding site" evidence="1">
    <location>
        <position position="187"/>
    </location>
    <ligand>
        <name>substrate</name>
    </ligand>
</feature>
<feature type="binding site" evidence="1">
    <location>
        <position position="218"/>
    </location>
    <ligand>
        <name>pyridoxal 5'-phosphate</name>
        <dbReference type="ChEBI" id="CHEBI:597326"/>
    </ligand>
</feature>
<feature type="binding site" evidence="1">
    <location>
        <begin position="246"/>
        <end position="248"/>
    </location>
    <ligand>
        <name>pyridoxal 5'-phosphate</name>
        <dbReference type="ChEBI" id="CHEBI:597326"/>
    </ligand>
</feature>
<feature type="binding site" evidence="1">
    <location>
        <position position="257"/>
    </location>
    <ligand>
        <name>pyridoxal 5'-phosphate</name>
        <dbReference type="ChEBI" id="CHEBI:597326"/>
    </ligand>
</feature>
<feature type="binding site" evidence="1">
    <location>
        <position position="292"/>
    </location>
    <ligand>
        <name>pyridoxal 5'-phosphate</name>
        <dbReference type="ChEBI" id="CHEBI:597326"/>
    </ligand>
</feature>
<feature type="binding site" evidence="1">
    <location>
        <position position="292"/>
    </location>
    <ligand>
        <name>substrate</name>
    </ligand>
</feature>
<feature type="binding site" evidence="1">
    <location>
        <position position="388"/>
    </location>
    <ligand>
        <name>substrate</name>
    </ligand>
</feature>
<feature type="modified residue" description="N6-(pyridoxal phosphate)lysine" evidence="1">
    <location>
        <position position="249"/>
    </location>
</feature>